<name>RS9_SULTO</name>
<proteinExistence type="inferred from homology"/>
<reference key="1">
    <citation type="journal article" date="2001" name="DNA Res.">
        <title>Complete genome sequence of an aerobic thermoacidophilic Crenarchaeon, Sulfolobus tokodaii strain7.</title>
        <authorList>
            <person name="Kawarabayasi Y."/>
            <person name="Hino Y."/>
            <person name="Horikawa H."/>
            <person name="Jin-no K."/>
            <person name="Takahashi M."/>
            <person name="Sekine M."/>
            <person name="Baba S."/>
            <person name="Ankai A."/>
            <person name="Kosugi H."/>
            <person name="Hosoyama A."/>
            <person name="Fukui S."/>
            <person name="Nagai Y."/>
            <person name="Nishijima K."/>
            <person name="Otsuka R."/>
            <person name="Nakazawa H."/>
            <person name="Takamiya M."/>
            <person name="Kato Y."/>
            <person name="Yoshizawa T."/>
            <person name="Tanaka T."/>
            <person name="Kudoh Y."/>
            <person name="Yamazaki J."/>
            <person name="Kushida N."/>
            <person name="Oguchi A."/>
            <person name="Aoki K."/>
            <person name="Masuda S."/>
            <person name="Yanagii M."/>
            <person name="Nishimura M."/>
            <person name="Yamagishi A."/>
            <person name="Oshima T."/>
            <person name="Kikuchi H."/>
        </authorList>
    </citation>
    <scope>NUCLEOTIDE SEQUENCE [LARGE SCALE GENOMIC DNA]</scope>
    <source>
        <strain>DSM 16993 / JCM 10545 / NBRC 100140 / 7</strain>
    </source>
</reference>
<keyword id="KW-1185">Reference proteome</keyword>
<keyword id="KW-0687">Ribonucleoprotein</keyword>
<keyword id="KW-0689">Ribosomal protein</keyword>
<feature type="chain" id="PRO_0000111476" description="Small ribosomal subunit protein uS9">
    <location>
        <begin position="1"/>
        <end position="137"/>
    </location>
</feature>
<gene>
    <name type="primary">rps9</name>
    <name type="ordered locus">STK_20640</name>
</gene>
<comment type="similarity">
    <text evidence="1">Belongs to the universal ribosomal protein uS9 family.</text>
</comment>
<protein>
    <recommendedName>
        <fullName evidence="1">Small ribosomal subunit protein uS9</fullName>
    </recommendedName>
    <alternativeName>
        <fullName>30S ribosomal protein S9</fullName>
    </alternativeName>
</protein>
<organism>
    <name type="scientific">Sulfurisphaera tokodaii (strain DSM 16993 / JCM 10545 / NBRC 100140 / 7)</name>
    <name type="common">Sulfolobus tokodaii</name>
    <dbReference type="NCBI Taxonomy" id="273063"/>
    <lineage>
        <taxon>Archaea</taxon>
        <taxon>Thermoproteota</taxon>
        <taxon>Thermoprotei</taxon>
        <taxon>Sulfolobales</taxon>
        <taxon>Sulfolobaceae</taxon>
        <taxon>Sulfurisphaera</taxon>
    </lineage>
</organism>
<accession>Q96YW3</accession>
<evidence type="ECO:0000305" key="1"/>
<dbReference type="EMBL" id="BA000023">
    <property type="protein sequence ID" value="BAB67163.1"/>
    <property type="molecule type" value="Genomic_DNA"/>
</dbReference>
<dbReference type="RefSeq" id="WP_010980139.1">
    <property type="nucleotide sequence ID" value="NC_003106.2"/>
</dbReference>
<dbReference type="SMR" id="Q96YW3"/>
<dbReference type="STRING" id="273063.STK_20640"/>
<dbReference type="GeneID" id="1460129"/>
<dbReference type="KEGG" id="sto:STK_20640"/>
<dbReference type="PATRIC" id="fig|273063.9.peg.2352"/>
<dbReference type="eggNOG" id="arCOG04243">
    <property type="taxonomic scope" value="Archaea"/>
</dbReference>
<dbReference type="OrthoDB" id="52677at2157"/>
<dbReference type="Proteomes" id="UP000001015">
    <property type="component" value="Chromosome"/>
</dbReference>
<dbReference type="GO" id="GO:0022627">
    <property type="term" value="C:cytosolic small ribosomal subunit"/>
    <property type="evidence" value="ECO:0007669"/>
    <property type="project" value="TreeGrafter"/>
</dbReference>
<dbReference type="GO" id="GO:0003723">
    <property type="term" value="F:RNA binding"/>
    <property type="evidence" value="ECO:0007669"/>
    <property type="project" value="TreeGrafter"/>
</dbReference>
<dbReference type="GO" id="GO:0003735">
    <property type="term" value="F:structural constituent of ribosome"/>
    <property type="evidence" value="ECO:0007669"/>
    <property type="project" value="InterPro"/>
</dbReference>
<dbReference type="GO" id="GO:0000462">
    <property type="term" value="P:maturation of SSU-rRNA from tricistronic rRNA transcript (SSU-rRNA, 5.8S rRNA, LSU-rRNA)"/>
    <property type="evidence" value="ECO:0007669"/>
    <property type="project" value="TreeGrafter"/>
</dbReference>
<dbReference type="GO" id="GO:0006412">
    <property type="term" value="P:translation"/>
    <property type="evidence" value="ECO:0007669"/>
    <property type="project" value="UniProtKB-UniRule"/>
</dbReference>
<dbReference type="FunFam" id="3.30.230.10:FF:000051">
    <property type="entry name" value="30S ribosomal protein S9"/>
    <property type="match status" value="1"/>
</dbReference>
<dbReference type="Gene3D" id="3.30.230.10">
    <property type="match status" value="1"/>
</dbReference>
<dbReference type="HAMAP" id="MF_00532_A">
    <property type="entry name" value="Ribosomal_uS9_A"/>
    <property type="match status" value="1"/>
</dbReference>
<dbReference type="InterPro" id="IPR020568">
    <property type="entry name" value="Ribosomal_Su5_D2-typ_SF"/>
</dbReference>
<dbReference type="InterPro" id="IPR000754">
    <property type="entry name" value="Ribosomal_uS9"/>
</dbReference>
<dbReference type="InterPro" id="IPR019958">
    <property type="entry name" value="Ribosomal_uS9_archaeal"/>
</dbReference>
<dbReference type="InterPro" id="IPR020574">
    <property type="entry name" value="Ribosomal_uS9_CS"/>
</dbReference>
<dbReference type="InterPro" id="IPR014721">
    <property type="entry name" value="Ribsml_uS5_D2-typ_fold_subgr"/>
</dbReference>
<dbReference type="NCBIfam" id="NF001749">
    <property type="entry name" value="PRK00474.1"/>
    <property type="match status" value="1"/>
</dbReference>
<dbReference type="NCBIfam" id="TIGR03627">
    <property type="entry name" value="uS9_arch"/>
    <property type="match status" value="1"/>
</dbReference>
<dbReference type="PANTHER" id="PTHR21569:SF16">
    <property type="entry name" value="RIBOSOMAL PROTEIN S16"/>
    <property type="match status" value="1"/>
</dbReference>
<dbReference type="PANTHER" id="PTHR21569">
    <property type="entry name" value="RIBOSOMAL PROTEIN S9"/>
    <property type="match status" value="1"/>
</dbReference>
<dbReference type="Pfam" id="PF00380">
    <property type="entry name" value="Ribosomal_S9"/>
    <property type="match status" value="1"/>
</dbReference>
<dbReference type="SUPFAM" id="SSF54211">
    <property type="entry name" value="Ribosomal protein S5 domain 2-like"/>
    <property type="match status" value="1"/>
</dbReference>
<dbReference type="PROSITE" id="PS00360">
    <property type="entry name" value="RIBOSOMAL_S9"/>
    <property type="match status" value="1"/>
</dbReference>
<sequence length="137" mass="15723">MSQQSQVIITYARRKMARARCYITPGKGRVFVNDIPLEIIPMEVVRMKIMEPLLLAGEKISSSIDAKIYVEGGGVMGQADAARMALARALVKFTGSKELEEIYKVYDRTMLAGDPRQTESEKWMRYSARRWRQKAYR</sequence>